<feature type="chain" id="PRO_1000082660" description="Nucleotide-binding protein Pnuc_1915">
    <location>
        <begin position="1"/>
        <end position="296"/>
    </location>
</feature>
<feature type="binding site" evidence="1">
    <location>
        <begin position="8"/>
        <end position="15"/>
    </location>
    <ligand>
        <name>ATP</name>
        <dbReference type="ChEBI" id="CHEBI:30616"/>
    </ligand>
</feature>
<feature type="binding site" evidence="1">
    <location>
        <begin position="57"/>
        <end position="60"/>
    </location>
    <ligand>
        <name>GTP</name>
        <dbReference type="ChEBI" id="CHEBI:37565"/>
    </ligand>
</feature>
<proteinExistence type="inferred from homology"/>
<accession>A4T063</accession>
<organism>
    <name type="scientific">Polynucleobacter asymbioticus (strain DSM 18221 / CIP 109841 / QLW-P1DMWA-1)</name>
    <name type="common">Polynucleobacter necessarius subsp. asymbioticus</name>
    <dbReference type="NCBI Taxonomy" id="312153"/>
    <lineage>
        <taxon>Bacteria</taxon>
        <taxon>Pseudomonadati</taxon>
        <taxon>Pseudomonadota</taxon>
        <taxon>Betaproteobacteria</taxon>
        <taxon>Burkholderiales</taxon>
        <taxon>Burkholderiaceae</taxon>
        <taxon>Polynucleobacter</taxon>
    </lineage>
</organism>
<name>Y1915_POLAQ</name>
<keyword id="KW-0067">ATP-binding</keyword>
<keyword id="KW-0342">GTP-binding</keyword>
<keyword id="KW-0547">Nucleotide-binding</keyword>
<keyword id="KW-1185">Reference proteome</keyword>
<gene>
    <name type="ordered locus">Pnuc_1915</name>
</gene>
<evidence type="ECO:0000255" key="1">
    <source>
        <dbReference type="HAMAP-Rule" id="MF_00636"/>
    </source>
</evidence>
<protein>
    <recommendedName>
        <fullName evidence="1">Nucleotide-binding protein Pnuc_1915</fullName>
    </recommendedName>
</protein>
<reference key="1">
    <citation type="journal article" date="2012" name="Stand. Genomic Sci.">
        <title>Complete genome sequence of Polynucleobacter necessarius subsp. asymbioticus type strain (QLW-P1DMWA-1(T)).</title>
        <authorList>
            <person name="Meincke L."/>
            <person name="Copeland A."/>
            <person name="Lapidus A."/>
            <person name="Lucas S."/>
            <person name="Berry K.W."/>
            <person name="Del Rio T.G."/>
            <person name="Hammon N."/>
            <person name="Dalin E."/>
            <person name="Tice H."/>
            <person name="Pitluck S."/>
            <person name="Richardson P."/>
            <person name="Bruce D."/>
            <person name="Goodwin L."/>
            <person name="Han C."/>
            <person name="Tapia R."/>
            <person name="Detter J.C."/>
            <person name="Schmutz J."/>
            <person name="Brettin T."/>
            <person name="Larimer F."/>
            <person name="Land M."/>
            <person name="Hauser L."/>
            <person name="Kyrpides N.C."/>
            <person name="Ivanova N."/>
            <person name="Goker M."/>
            <person name="Woyke T."/>
            <person name="Wu Q.L."/>
            <person name="Pockl M."/>
            <person name="Hahn M.W."/>
            <person name="Klenk H.P."/>
        </authorList>
    </citation>
    <scope>NUCLEOTIDE SEQUENCE [LARGE SCALE GENOMIC DNA]</scope>
    <source>
        <strain>DSM 18221 / CIP 109841 / QLW-P1DMWA-1</strain>
    </source>
</reference>
<comment type="function">
    <text evidence="1">Displays ATPase and GTPase activities.</text>
</comment>
<comment type="similarity">
    <text evidence="1">Belongs to the RapZ-like family.</text>
</comment>
<dbReference type="EMBL" id="CP000655">
    <property type="protein sequence ID" value="ABP35127.1"/>
    <property type="molecule type" value="Genomic_DNA"/>
</dbReference>
<dbReference type="RefSeq" id="WP_011903750.1">
    <property type="nucleotide sequence ID" value="NC_009379.1"/>
</dbReference>
<dbReference type="SMR" id="A4T063"/>
<dbReference type="GeneID" id="31482305"/>
<dbReference type="KEGG" id="pnu:Pnuc_1915"/>
<dbReference type="eggNOG" id="COG1660">
    <property type="taxonomic scope" value="Bacteria"/>
</dbReference>
<dbReference type="HOGENOM" id="CLU_059558_1_1_4"/>
<dbReference type="Proteomes" id="UP000000231">
    <property type="component" value="Chromosome"/>
</dbReference>
<dbReference type="GO" id="GO:0005524">
    <property type="term" value="F:ATP binding"/>
    <property type="evidence" value="ECO:0007669"/>
    <property type="project" value="UniProtKB-UniRule"/>
</dbReference>
<dbReference type="GO" id="GO:0005525">
    <property type="term" value="F:GTP binding"/>
    <property type="evidence" value="ECO:0007669"/>
    <property type="project" value="UniProtKB-UniRule"/>
</dbReference>
<dbReference type="HAMAP" id="MF_00636">
    <property type="entry name" value="RapZ_like"/>
    <property type="match status" value="1"/>
</dbReference>
<dbReference type="InterPro" id="IPR027417">
    <property type="entry name" value="P-loop_NTPase"/>
</dbReference>
<dbReference type="InterPro" id="IPR005337">
    <property type="entry name" value="RapZ-like"/>
</dbReference>
<dbReference type="InterPro" id="IPR053930">
    <property type="entry name" value="RapZ-like_N"/>
</dbReference>
<dbReference type="InterPro" id="IPR053931">
    <property type="entry name" value="RapZ_C"/>
</dbReference>
<dbReference type="NCBIfam" id="NF003828">
    <property type="entry name" value="PRK05416.1"/>
    <property type="match status" value="1"/>
</dbReference>
<dbReference type="PANTHER" id="PTHR30448">
    <property type="entry name" value="RNASE ADAPTER PROTEIN RAPZ"/>
    <property type="match status" value="1"/>
</dbReference>
<dbReference type="PANTHER" id="PTHR30448:SF0">
    <property type="entry name" value="RNASE ADAPTER PROTEIN RAPZ"/>
    <property type="match status" value="1"/>
</dbReference>
<dbReference type="Pfam" id="PF22740">
    <property type="entry name" value="PapZ_C"/>
    <property type="match status" value="1"/>
</dbReference>
<dbReference type="Pfam" id="PF03668">
    <property type="entry name" value="RapZ-like_N"/>
    <property type="match status" value="1"/>
</dbReference>
<dbReference type="PIRSF" id="PIRSF005052">
    <property type="entry name" value="P-loopkin"/>
    <property type="match status" value="1"/>
</dbReference>
<dbReference type="SUPFAM" id="SSF52540">
    <property type="entry name" value="P-loop containing nucleoside triphosphate hydrolases"/>
    <property type="match status" value="1"/>
</dbReference>
<sequence length="296" mass="33397">MQINLITGISGSGKSVALRAFEDAGYDCVDNLPVSLLENLIQTLEGENSERVAVAIDARRGQSIAQLPSILENLRRNHQVRVVFLNADTNTLVQRFSETRRRHPLSTSAQQTQSATLIEAIDRERNLLEPLRAQAHSIDTSSLPAHALRSWIQDLLKDKPTGLTVVFESFGFKKGVPSEADLVFDVRCLPNPHYDKILRPLTGNDKPVKEFLEKIPEVISMECDIIQFIEKWLPHYIADGRSYLTVAIGCTGGQHRSVYLVNRISEHFRAQKDLIDLQLNFLDRHRELDSIPVTKL</sequence>